<protein>
    <recommendedName>
        <fullName evidence="5">Omega/M-ectatotoxin-Et1a subunit B</fullName>
        <shortName evidence="5">Omega/M-ECTX-Et1a subunit B</shortName>
    </recommendedName>
    <alternativeName>
        <fullName evidence="6">Ectatomin subunit B</fullName>
        <shortName>EA</shortName>
    </alternativeName>
    <alternativeName>
        <fullName evidence="5">Ectatomin-Et1 subunit B</fullName>
    </alternativeName>
</protein>
<name>TX1AB_ECTTU</name>
<reference key="1">
    <citation type="journal article" date="1994" name="Bioorg. Khim.">
        <title>Structure-activity study of the basic toxic component of venom from the ant Ectatomma tuberculatum.</title>
        <authorList>
            <person name="Pluzhnikov K.A."/>
            <person name="Nolde D.E."/>
            <person name="Tertishnikova S.M."/>
            <person name="Sukhanov S.V."/>
            <person name="Sobol A.G."/>
            <person name="Torgov M.Y."/>
            <person name="Filippov A.K."/>
            <person name="Arseniev A.S."/>
            <person name="Grishin E.V."/>
        </authorList>
    </citation>
    <scope>PROTEIN SEQUENCE</scope>
    <scope>FUNCTION</scope>
    <scope>TOXIC DOSE</scope>
    <scope>STRUCTURE BY NMR</scope>
    <scope>DISULFIDE BOND</scope>
    <scope>SUBCELLULAR LOCATION</scope>
    <scope>SUBUNIT</scope>
    <source>
        <tissue>Venom</tissue>
    </source>
</reference>
<reference key="2">
    <citation type="journal article" date="1999" name="Eur. J. Biochem.">
        <title>Analysis of ectatomin action on cell membranes.</title>
        <authorList>
            <person name="Pluzhnikov K."/>
            <person name="Nosyreva E."/>
            <person name="Shevchenko L."/>
            <person name="Kokoz Y."/>
            <person name="Schmalz D."/>
            <person name="Hucho F."/>
            <person name="Grishin E."/>
        </authorList>
    </citation>
    <scope>FUNCTION</scope>
    <scope>EFFECT ON CARDIAC L-TYPE CALCIUM CURRENT</scope>
</reference>
<reference key="3">
    <citation type="journal article" date="2016" name="Toxins">
        <title>The biochemical toxin arsenal from ant venoms.</title>
        <authorList>
            <person name="Touchard A."/>
            <person name="Aili S.R."/>
            <person name="Fox E.G."/>
            <person name="Escoubas P."/>
            <person name="Orivel J."/>
            <person name="Nicholson G.M."/>
            <person name="Dejean A."/>
        </authorList>
    </citation>
    <scope>REVIEW</scope>
    <scope>NOMENCLATURE</scope>
</reference>
<reference key="4">
    <citation type="journal article" date="1994" name="FEBS Lett.">
        <title>Toxic principle of selva ant venom is a pore-forming protein transformer.</title>
        <authorList>
            <person name="Arseniev A.S."/>
            <person name="Pluzhnikov K.A."/>
            <person name="Nolde D.E."/>
            <person name="Sobol A.G."/>
            <person name="Torgov M.Y."/>
            <person name="Sukhanov S.V."/>
            <person name="Grishin E.V."/>
        </authorList>
    </citation>
    <scope>STRUCTURE BY NMR</scope>
    <scope>DISULFIDE BOND</scope>
</reference>
<reference key="5">
    <citation type="journal article" date="1995" name="J. Biomol. NMR">
        <title>Three-dimensional structure of ectatomin from Ectatomma tuberculatum ant venom.</title>
        <authorList>
            <person name="Nolde D.E."/>
            <person name="Sobol A.G."/>
            <person name="Pluzhnikov K.A."/>
            <person name="Grishin E.V."/>
            <person name="Arseniev A.S."/>
        </authorList>
    </citation>
    <scope>STRUCTURE BY NMR</scope>
    <scope>DISULFIDE BOND</scope>
</reference>
<dbReference type="PIR" id="S77895">
    <property type="entry name" value="S77895"/>
</dbReference>
<dbReference type="PDB" id="1ECI">
    <property type="method" value="NMR"/>
    <property type="chains" value="B=1-34"/>
</dbReference>
<dbReference type="PDBsum" id="1ECI"/>
<dbReference type="SMR" id="P49344"/>
<dbReference type="MINT" id="P49344"/>
<dbReference type="EvolutionaryTrace" id="P49344"/>
<dbReference type="GO" id="GO:0005576">
    <property type="term" value="C:extracellular region"/>
    <property type="evidence" value="ECO:0007669"/>
    <property type="project" value="UniProtKB-SubCell"/>
</dbReference>
<dbReference type="GO" id="GO:0016020">
    <property type="term" value="C:membrane"/>
    <property type="evidence" value="ECO:0007669"/>
    <property type="project" value="UniProtKB-KW"/>
</dbReference>
<dbReference type="GO" id="GO:0044218">
    <property type="term" value="C:other organism cell membrane"/>
    <property type="evidence" value="ECO:0007669"/>
    <property type="project" value="UniProtKB-KW"/>
</dbReference>
<dbReference type="GO" id="GO:0005246">
    <property type="term" value="F:calcium channel regulator activity"/>
    <property type="evidence" value="ECO:0007669"/>
    <property type="project" value="UniProtKB-KW"/>
</dbReference>
<dbReference type="GO" id="GO:0005216">
    <property type="term" value="F:monoatomic ion channel activity"/>
    <property type="evidence" value="ECO:0007669"/>
    <property type="project" value="InterPro"/>
</dbReference>
<dbReference type="GO" id="GO:0090729">
    <property type="term" value="F:toxin activity"/>
    <property type="evidence" value="ECO:0007669"/>
    <property type="project" value="UniProtKB-KW"/>
</dbReference>
<dbReference type="InterPro" id="IPR009458">
    <property type="entry name" value="Ectatomin"/>
</dbReference>
<dbReference type="InterPro" id="IPR036261">
    <property type="entry name" value="Ectatomin_sf"/>
</dbReference>
<dbReference type="Pfam" id="PF06457">
    <property type="entry name" value="Ectatomin"/>
    <property type="match status" value="1"/>
</dbReference>
<dbReference type="PIRSF" id="PIRSF005989">
    <property type="entry name" value="Ectatomin"/>
    <property type="match status" value="1"/>
</dbReference>
<dbReference type="SUPFAM" id="SSF47401">
    <property type="entry name" value="Ectatomin subunits"/>
    <property type="match status" value="1"/>
</dbReference>
<comment type="function">
    <text evidence="1 2">Algogenic for animals, human and insects (PubMed:7826413). At high concentrations (0.5-1 uM), it acts as a pore-forming protein that forms nonselective cation channels both in cell and artificial membranes (PubMed:7826413). It is weakly selective for cation over anions channel conductance is identical in both directions. At lower concentrations (1-10 nM), this heterodimer inhibits cardiac L-type calcium currents in isolated rat cardiac ventricular myocytes (PubMed:10336635).</text>
</comment>
<comment type="subunit">
    <text evidence="2">Heterodimer of an A and a B chain; disulfide-linked.</text>
</comment>
<comment type="subcellular location">
    <subcellularLocation>
        <location evidence="2">Secreted</location>
    </subcellularLocation>
    <subcellularLocation>
        <location evidence="8">Target cell membrane</location>
    </subcellularLocation>
</comment>
<comment type="tissue specificity">
    <text evidence="8">Expressed by the venom gland.</text>
</comment>
<comment type="toxic dose">
    <text evidence="2">LD(50) is 6.8 ug/kg by intracerebroventricular injection into mice.</text>
</comment>
<comment type="similarity">
    <text evidence="7">Belongs to the ectatomin family. Ectatomin-Et subfamily.</text>
</comment>
<proteinExistence type="evidence at protein level"/>
<feature type="peptide" id="PRO_0000044888" description="Omega/M-ectatotoxin-Et1a subunit B" evidence="2">
    <location>
        <begin position="1"/>
        <end position="34"/>
    </location>
</feature>
<feature type="disulfide bond" evidence="2 3 4 9">
    <location>
        <begin position="10"/>
        <end position="32"/>
    </location>
</feature>
<feature type="disulfide bond" description="Interchain (with C-22 in subunit A)" evidence="2 3 4 9">
    <location>
        <position position="20"/>
    </location>
</feature>
<feature type="helix" evidence="10">
    <location>
        <begin position="4"/>
        <end position="17"/>
    </location>
</feature>
<feature type="helix" evidence="10">
    <location>
        <begin position="24"/>
        <end position="31"/>
    </location>
</feature>
<sequence length="34" mass="3786">WSTIVKLTICPTLKSMAKKCEGSIATMIKKKCDK</sequence>
<evidence type="ECO:0000269" key="1">
    <source>
    </source>
</evidence>
<evidence type="ECO:0000269" key="2">
    <source>
    </source>
</evidence>
<evidence type="ECO:0000269" key="3">
    <source>
    </source>
</evidence>
<evidence type="ECO:0000269" key="4">
    <source>
    </source>
</evidence>
<evidence type="ECO:0000303" key="5">
    <source>
    </source>
</evidence>
<evidence type="ECO:0000303" key="6">
    <source>
    </source>
</evidence>
<evidence type="ECO:0000305" key="7"/>
<evidence type="ECO:0000305" key="8">
    <source>
    </source>
</evidence>
<evidence type="ECO:0000312" key="9">
    <source>
        <dbReference type="PDB" id="1ECI"/>
    </source>
</evidence>
<evidence type="ECO:0007829" key="10">
    <source>
        <dbReference type="PDB" id="1ECI"/>
    </source>
</evidence>
<accession>P49344</accession>
<keyword id="KW-0002">3D-structure</keyword>
<keyword id="KW-0108">Calcium channel impairing toxin</keyword>
<keyword id="KW-0903">Direct protein sequencing</keyword>
<keyword id="KW-1015">Disulfide bond</keyword>
<keyword id="KW-0407">Ion channel</keyword>
<keyword id="KW-0872">Ion channel impairing toxin</keyword>
<keyword id="KW-0406">Ion transport</keyword>
<keyword id="KW-0472">Membrane</keyword>
<keyword id="KW-0964">Secreted</keyword>
<keyword id="KW-1052">Target cell membrane</keyword>
<keyword id="KW-1053">Target membrane</keyword>
<keyword id="KW-0800">Toxin</keyword>
<keyword id="KW-0813">Transport</keyword>
<keyword id="KW-1218">Voltage-gated calcium channel impairing toxin</keyword>
<organism>
    <name type="scientific">Ectatomma tuberculatum</name>
    <name type="common">Selva ant</name>
    <dbReference type="NCBI Taxonomy" id="39300"/>
    <lineage>
        <taxon>Eukaryota</taxon>
        <taxon>Metazoa</taxon>
        <taxon>Ecdysozoa</taxon>
        <taxon>Arthropoda</taxon>
        <taxon>Hexapoda</taxon>
        <taxon>Insecta</taxon>
        <taxon>Pterygota</taxon>
        <taxon>Neoptera</taxon>
        <taxon>Endopterygota</taxon>
        <taxon>Hymenoptera</taxon>
        <taxon>Apocrita</taxon>
        <taxon>Aculeata</taxon>
        <taxon>Formicoidea</taxon>
        <taxon>Formicidae</taxon>
        <taxon>Ectatomminae</taxon>
        <taxon>Ectatommini</taxon>
        <taxon>Ectatomma</taxon>
    </lineage>
</organism>